<feature type="chain" id="PRO_0000347158" description="Large ribosomal subunit protein uL30">
    <location>
        <begin position="1"/>
        <end position="185"/>
    </location>
</feature>
<accession>A8MDN0</accession>
<sequence length="185" mass="20767">MQSTQGIERSGEHGRVIVAAVRIRGLVDVSPEVNHTLNLLRLRRRFTCSVYVLSDSIKGMLKSVESWATWGELSRDTLIQLLRRRGRIVGDLPLTDEYLKKYGWGSVEELVDAYLKGEVKSLWCRRGEGPRMINGKASCIPGLKPFFRLHPPKGGFKGSIKKPYGAGGELGYRGLDINDLILRMI</sequence>
<organism>
    <name type="scientific">Caldivirga maquilingensis (strain ATCC 700844 / DSM 13496 / JCM 10307 / IC-167)</name>
    <dbReference type="NCBI Taxonomy" id="397948"/>
    <lineage>
        <taxon>Archaea</taxon>
        <taxon>Thermoproteota</taxon>
        <taxon>Thermoprotei</taxon>
        <taxon>Thermoproteales</taxon>
        <taxon>Thermoproteaceae</taxon>
        <taxon>Caldivirga</taxon>
    </lineage>
</organism>
<comment type="subunit">
    <text evidence="1">Part of the 50S ribosomal subunit.</text>
</comment>
<comment type="similarity">
    <text evidence="1">Belongs to the universal ribosomal protein uL30 family.</text>
</comment>
<proteinExistence type="inferred from homology"/>
<name>RL30_CALMQ</name>
<gene>
    <name evidence="1" type="primary">rpl30</name>
    <name type="ordered locus">Cmaq_1057</name>
</gene>
<dbReference type="EMBL" id="CP000852">
    <property type="protein sequence ID" value="ABW01886.1"/>
    <property type="molecule type" value="Genomic_DNA"/>
</dbReference>
<dbReference type="RefSeq" id="WP_012186105.1">
    <property type="nucleotide sequence ID" value="NC_009954.1"/>
</dbReference>
<dbReference type="SMR" id="A8MDN0"/>
<dbReference type="STRING" id="397948.Cmaq_1057"/>
<dbReference type="GeneID" id="5710095"/>
<dbReference type="KEGG" id="cma:Cmaq_1057"/>
<dbReference type="eggNOG" id="arCOG04086">
    <property type="taxonomic scope" value="Archaea"/>
</dbReference>
<dbReference type="HOGENOM" id="CLU_055156_6_0_2"/>
<dbReference type="OrthoDB" id="6379at2157"/>
<dbReference type="Proteomes" id="UP000001137">
    <property type="component" value="Chromosome"/>
</dbReference>
<dbReference type="GO" id="GO:0022625">
    <property type="term" value="C:cytosolic large ribosomal subunit"/>
    <property type="evidence" value="ECO:0007669"/>
    <property type="project" value="TreeGrafter"/>
</dbReference>
<dbReference type="GO" id="GO:0003723">
    <property type="term" value="F:RNA binding"/>
    <property type="evidence" value="ECO:0007669"/>
    <property type="project" value="TreeGrafter"/>
</dbReference>
<dbReference type="GO" id="GO:0003735">
    <property type="term" value="F:structural constituent of ribosome"/>
    <property type="evidence" value="ECO:0007669"/>
    <property type="project" value="InterPro"/>
</dbReference>
<dbReference type="GO" id="GO:0000463">
    <property type="term" value="P:maturation of LSU-rRNA from tricistronic rRNA transcript (SSU-rRNA, 5.8S rRNA, LSU-rRNA)"/>
    <property type="evidence" value="ECO:0007669"/>
    <property type="project" value="TreeGrafter"/>
</dbReference>
<dbReference type="GO" id="GO:0006412">
    <property type="term" value="P:translation"/>
    <property type="evidence" value="ECO:0007669"/>
    <property type="project" value="UniProtKB-UniRule"/>
</dbReference>
<dbReference type="CDD" id="cd01657">
    <property type="entry name" value="Ribosomal_L7_archeal_euk"/>
    <property type="match status" value="1"/>
</dbReference>
<dbReference type="Gene3D" id="1.10.15.30">
    <property type="match status" value="1"/>
</dbReference>
<dbReference type="Gene3D" id="3.30.1390.20">
    <property type="entry name" value="Ribosomal protein L30, ferredoxin-like fold domain"/>
    <property type="match status" value="1"/>
</dbReference>
<dbReference type="HAMAP" id="MF_01371_A">
    <property type="entry name" value="Ribosomal_uL30_A"/>
    <property type="match status" value="1"/>
</dbReference>
<dbReference type="InterPro" id="IPR036919">
    <property type="entry name" value="Ribo_uL30_ferredoxin-like_sf"/>
</dbReference>
<dbReference type="InterPro" id="IPR039699">
    <property type="entry name" value="Ribosomal_uL30"/>
</dbReference>
<dbReference type="InterPro" id="IPR005997">
    <property type="entry name" value="Ribosomal_uL30_arc"/>
</dbReference>
<dbReference type="InterPro" id="IPR035808">
    <property type="entry name" value="Ribosomal_uL30_euk_arc"/>
</dbReference>
<dbReference type="InterPro" id="IPR016082">
    <property type="entry name" value="Ribosomal_uL30_ferredoxin-like"/>
</dbReference>
<dbReference type="NCBIfam" id="NF004711">
    <property type="entry name" value="PRK06049.1"/>
    <property type="match status" value="1"/>
</dbReference>
<dbReference type="NCBIfam" id="TIGR01309">
    <property type="entry name" value="uL30_arch"/>
    <property type="match status" value="1"/>
</dbReference>
<dbReference type="PANTHER" id="PTHR11524">
    <property type="entry name" value="60S RIBOSOMAL PROTEIN L7"/>
    <property type="match status" value="1"/>
</dbReference>
<dbReference type="PANTHER" id="PTHR11524:SF16">
    <property type="entry name" value="LARGE RIBOSOMAL SUBUNIT PROTEIN UL30"/>
    <property type="match status" value="1"/>
</dbReference>
<dbReference type="Pfam" id="PF00327">
    <property type="entry name" value="Ribosomal_L30"/>
    <property type="match status" value="1"/>
</dbReference>
<dbReference type="SUPFAM" id="SSF55129">
    <property type="entry name" value="Ribosomal protein L30p/L7e"/>
    <property type="match status" value="1"/>
</dbReference>
<reference key="1">
    <citation type="submission" date="2007-10" db="EMBL/GenBank/DDBJ databases">
        <title>Complete sequence of Caldivirga maquilingensis IC-167.</title>
        <authorList>
            <consortium name="US DOE Joint Genome Institute"/>
            <person name="Copeland A."/>
            <person name="Lucas S."/>
            <person name="Lapidus A."/>
            <person name="Barry K."/>
            <person name="Glavina del Rio T."/>
            <person name="Dalin E."/>
            <person name="Tice H."/>
            <person name="Pitluck S."/>
            <person name="Saunders E."/>
            <person name="Brettin T."/>
            <person name="Bruce D."/>
            <person name="Detter J.C."/>
            <person name="Han C."/>
            <person name="Schmutz J."/>
            <person name="Larimer F."/>
            <person name="Land M."/>
            <person name="Hauser L."/>
            <person name="Kyrpides N."/>
            <person name="Ivanova N."/>
            <person name="Biddle J.F."/>
            <person name="Zhang Z."/>
            <person name="Fitz-Gibbon S.T."/>
            <person name="Lowe T.M."/>
            <person name="Saltikov C."/>
            <person name="House C.H."/>
            <person name="Richardson P."/>
        </authorList>
    </citation>
    <scope>NUCLEOTIDE SEQUENCE [LARGE SCALE GENOMIC DNA]</scope>
    <source>
        <strain>ATCC 700844 / DSM 13496 / JCM 10307 / IC-167</strain>
    </source>
</reference>
<protein>
    <recommendedName>
        <fullName evidence="1">Large ribosomal subunit protein uL30</fullName>
    </recommendedName>
    <alternativeName>
        <fullName evidence="2">50S ribosomal protein L30</fullName>
    </alternativeName>
</protein>
<evidence type="ECO:0000255" key="1">
    <source>
        <dbReference type="HAMAP-Rule" id="MF_01371"/>
    </source>
</evidence>
<evidence type="ECO:0000305" key="2"/>
<keyword id="KW-1185">Reference proteome</keyword>
<keyword id="KW-0687">Ribonucleoprotein</keyword>
<keyword id="KW-0689">Ribosomal protein</keyword>